<protein>
    <recommendedName>
        <fullName evidence="1">GTP 3',8-cyclase</fullName>
        <ecNumber evidence="1">4.1.99.22</ecNumber>
    </recommendedName>
    <alternativeName>
        <fullName evidence="1">Molybdenum cofactor biosynthesis protein A</fullName>
    </alternativeName>
</protein>
<sequence length="340" mass="39126">MVAQIKDKLGRPIRDLRISVTDRCNFRCDYCMPKEIFGDDYVFLPKDELLTFEEMVRIAKVYAELGVKKLRITGGEPLLRRNLYQLIAELNQIDGIEDIGMTTNGLLLKKHGQKLYDAGLRRINVSLDAIDNEVFQAINNRNIKATTILDQIDYAVSIGFHVKVNVVIQKGINDDQIIPMVDYFKDKNIEIRFIEFMDVGNDNGWDFSKVVTKNEMLDMIESHFDIEPVPPKYFGEVAKYYKHKDNGAQFGLITSVSASFCSTCTRARLSSDGKFYGCLFSTVEGFNIKSFIRSGVTDDELREQLITLWNVRDDRYSDERTEQTVKNRQRKKINMNYIGG</sequence>
<evidence type="ECO:0000255" key="1">
    <source>
        <dbReference type="HAMAP-Rule" id="MF_01225"/>
    </source>
</evidence>
<evidence type="ECO:0000255" key="2">
    <source>
        <dbReference type="PROSITE-ProRule" id="PRU01266"/>
    </source>
</evidence>
<organism>
    <name type="scientific">Staphylococcus haemolyticus (strain JCSC1435)</name>
    <dbReference type="NCBI Taxonomy" id="279808"/>
    <lineage>
        <taxon>Bacteria</taxon>
        <taxon>Bacillati</taxon>
        <taxon>Bacillota</taxon>
        <taxon>Bacilli</taxon>
        <taxon>Bacillales</taxon>
        <taxon>Staphylococcaceae</taxon>
        <taxon>Staphylococcus</taxon>
    </lineage>
</organism>
<proteinExistence type="inferred from homology"/>
<reference key="1">
    <citation type="journal article" date="2005" name="J. Bacteriol.">
        <title>Whole-genome sequencing of Staphylococcus haemolyticus uncovers the extreme plasticity of its genome and the evolution of human-colonizing staphylococcal species.</title>
        <authorList>
            <person name="Takeuchi F."/>
            <person name="Watanabe S."/>
            <person name="Baba T."/>
            <person name="Yuzawa H."/>
            <person name="Ito T."/>
            <person name="Morimoto Y."/>
            <person name="Kuroda M."/>
            <person name="Cui L."/>
            <person name="Takahashi M."/>
            <person name="Ankai A."/>
            <person name="Baba S."/>
            <person name="Fukui S."/>
            <person name="Lee J.C."/>
            <person name="Hiramatsu K."/>
        </authorList>
    </citation>
    <scope>NUCLEOTIDE SEQUENCE [LARGE SCALE GENOMIC DNA]</scope>
    <source>
        <strain>JCSC1435</strain>
    </source>
</reference>
<gene>
    <name evidence="1" type="primary">moaA</name>
    <name type="ordered locus">SH0784</name>
</gene>
<comment type="function">
    <text evidence="1">Catalyzes the cyclization of GTP to (8S)-3',8-cyclo-7,8-dihydroguanosine 5'-triphosphate.</text>
</comment>
<comment type="catalytic activity">
    <reaction evidence="1">
        <text>GTP + AH2 + S-adenosyl-L-methionine = (8S)-3',8-cyclo-7,8-dihydroguanosine 5'-triphosphate + 5'-deoxyadenosine + L-methionine + A + H(+)</text>
        <dbReference type="Rhea" id="RHEA:49576"/>
        <dbReference type="ChEBI" id="CHEBI:13193"/>
        <dbReference type="ChEBI" id="CHEBI:15378"/>
        <dbReference type="ChEBI" id="CHEBI:17319"/>
        <dbReference type="ChEBI" id="CHEBI:17499"/>
        <dbReference type="ChEBI" id="CHEBI:37565"/>
        <dbReference type="ChEBI" id="CHEBI:57844"/>
        <dbReference type="ChEBI" id="CHEBI:59789"/>
        <dbReference type="ChEBI" id="CHEBI:131766"/>
        <dbReference type="EC" id="4.1.99.22"/>
    </reaction>
</comment>
<comment type="cofactor">
    <cofactor evidence="1">
        <name>[4Fe-4S] cluster</name>
        <dbReference type="ChEBI" id="CHEBI:49883"/>
    </cofactor>
    <text evidence="1">Binds 2 [4Fe-4S] clusters. Binds 1 [4Fe-4S] cluster coordinated with 3 cysteines and an exchangeable S-adenosyl-L-methionine and 1 [4Fe-4S] cluster coordinated with 3 cysteines and the GTP-derived substrate.</text>
</comment>
<comment type="pathway">
    <text evidence="1">Cofactor biosynthesis; molybdopterin biosynthesis.</text>
</comment>
<comment type="subunit">
    <text evidence="1">Monomer and homodimer.</text>
</comment>
<comment type="similarity">
    <text evidence="1">Belongs to the radical SAM superfamily. MoaA family.</text>
</comment>
<dbReference type="EC" id="4.1.99.22" evidence="1"/>
<dbReference type="EMBL" id="AP006716">
    <property type="protein sequence ID" value="BAE04093.1"/>
    <property type="molecule type" value="Genomic_DNA"/>
</dbReference>
<dbReference type="RefSeq" id="WP_011275107.1">
    <property type="nucleotide sequence ID" value="NC_007168.1"/>
</dbReference>
<dbReference type="SMR" id="Q4L8D2"/>
<dbReference type="GeneID" id="93780174"/>
<dbReference type="KEGG" id="sha:SH0784"/>
<dbReference type="eggNOG" id="COG2896">
    <property type="taxonomic scope" value="Bacteria"/>
</dbReference>
<dbReference type="HOGENOM" id="CLU_009273_0_1_9"/>
<dbReference type="OrthoDB" id="9763993at2"/>
<dbReference type="UniPathway" id="UPA00344"/>
<dbReference type="Proteomes" id="UP000000543">
    <property type="component" value="Chromosome"/>
</dbReference>
<dbReference type="GO" id="GO:0051539">
    <property type="term" value="F:4 iron, 4 sulfur cluster binding"/>
    <property type="evidence" value="ECO:0007669"/>
    <property type="project" value="UniProtKB-UniRule"/>
</dbReference>
<dbReference type="GO" id="GO:0061799">
    <property type="term" value="F:cyclic pyranopterin monophosphate synthase activity"/>
    <property type="evidence" value="ECO:0007669"/>
    <property type="project" value="TreeGrafter"/>
</dbReference>
<dbReference type="GO" id="GO:0061798">
    <property type="term" value="F:GTP 3',8'-cyclase activity"/>
    <property type="evidence" value="ECO:0007669"/>
    <property type="project" value="UniProtKB-UniRule"/>
</dbReference>
<dbReference type="GO" id="GO:0005525">
    <property type="term" value="F:GTP binding"/>
    <property type="evidence" value="ECO:0007669"/>
    <property type="project" value="UniProtKB-UniRule"/>
</dbReference>
<dbReference type="GO" id="GO:0046872">
    <property type="term" value="F:metal ion binding"/>
    <property type="evidence" value="ECO:0007669"/>
    <property type="project" value="UniProtKB-KW"/>
</dbReference>
<dbReference type="GO" id="GO:1904047">
    <property type="term" value="F:S-adenosyl-L-methionine binding"/>
    <property type="evidence" value="ECO:0007669"/>
    <property type="project" value="UniProtKB-UniRule"/>
</dbReference>
<dbReference type="GO" id="GO:0006777">
    <property type="term" value="P:Mo-molybdopterin cofactor biosynthetic process"/>
    <property type="evidence" value="ECO:0007669"/>
    <property type="project" value="UniProtKB-UniRule"/>
</dbReference>
<dbReference type="CDD" id="cd01335">
    <property type="entry name" value="Radical_SAM"/>
    <property type="match status" value="1"/>
</dbReference>
<dbReference type="CDD" id="cd21117">
    <property type="entry name" value="Twitch_MoaA"/>
    <property type="match status" value="1"/>
</dbReference>
<dbReference type="Gene3D" id="3.20.20.70">
    <property type="entry name" value="Aldolase class I"/>
    <property type="match status" value="1"/>
</dbReference>
<dbReference type="HAMAP" id="MF_01225_B">
    <property type="entry name" value="MoaA_B"/>
    <property type="match status" value="1"/>
</dbReference>
<dbReference type="InterPro" id="IPR013785">
    <property type="entry name" value="Aldolase_TIM"/>
</dbReference>
<dbReference type="InterPro" id="IPR006638">
    <property type="entry name" value="Elp3/MiaA/NifB-like_rSAM"/>
</dbReference>
<dbReference type="InterPro" id="IPR013483">
    <property type="entry name" value="MoaA"/>
</dbReference>
<dbReference type="InterPro" id="IPR000385">
    <property type="entry name" value="MoaA_NifB_PqqE_Fe-S-bd_CS"/>
</dbReference>
<dbReference type="InterPro" id="IPR010505">
    <property type="entry name" value="MoaA_twitch"/>
</dbReference>
<dbReference type="InterPro" id="IPR050105">
    <property type="entry name" value="MoCo_biosynth_MoaA/MoaC"/>
</dbReference>
<dbReference type="InterPro" id="IPR007197">
    <property type="entry name" value="rSAM"/>
</dbReference>
<dbReference type="NCBIfam" id="TIGR02666">
    <property type="entry name" value="moaA"/>
    <property type="match status" value="1"/>
</dbReference>
<dbReference type="PANTHER" id="PTHR22960:SF0">
    <property type="entry name" value="MOLYBDENUM COFACTOR BIOSYNTHESIS PROTEIN 1"/>
    <property type="match status" value="1"/>
</dbReference>
<dbReference type="PANTHER" id="PTHR22960">
    <property type="entry name" value="MOLYBDOPTERIN COFACTOR SYNTHESIS PROTEIN A"/>
    <property type="match status" value="1"/>
</dbReference>
<dbReference type="Pfam" id="PF13353">
    <property type="entry name" value="Fer4_12"/>
    <property type="match status" value="1"/>
</dbReference>
<dbReference type="Pfam" id="PF06463">
    <property type="entry name" value="Mob_synth_C"/>
    <property type="match status" value="1"/>
</dbReference>
<dbReference type="Pfam" id="PF04055">
    <property type="entry name" value="Radical_SAM"/>
    <property type="match status" value="1"/>
</dbReference>
<dbReference type="SFLD" id="SFLDF00276">
    <property type="entry name" value="cyclic_pyranopterin_phosphate"/>
    <property type="match status" value="1"/>
</dbReference>
<dbReference type="SFLD" id="SFLDG01386">
    <property type="entry name" value="main_SPASM_domain-containing"/>
    <property type="match status" value="1"/>
</dbReference>
<dbReference type="SMART" id="SM00729">
    <property type="entry name" value="Elp3"/>
    <property type="match status" value="1"/>
</dbReference>
<dbReference type="SUPFAM" id="SSF102114">
    <property type="entry name" value="Radical SAM enzymes"/>
    <property type="match status" value="1"/>
</dbReference>
<dbReference type="PROSITE" id="PS01305">
    <property type="entry name" value="MOAA_NIFB_PQQE"/>
    <property type="match status" value="1"/>
</dbReference>
<dbReference type="PROSITE" id="PS51918">
    <property type="entry name" value="RADICAL_SAM"/>
    <property type="match status" value="1"/>
</dbReference>
<accession>Q4L8D2</accession>
<feature type="chain" id="PRO_0000152999" description="GTP 3',8-cyclase">
    <location>
        <begin position="1"/>
        <end position="340"/>
    </location>
</feature>
<feature type="domain" description="Radical SAM core" evidence="2">
    <location>
        <begin position="8"/>
        <end position="227"/>
    </location>
</feature>
<feature type="binding site" evidence="1">
    <location>
        <position position="17"/>
    </location>
    <ligand>
        <name>GTP</name>
        <dbReference type="ChEBI" id="CHEBI:37565"/>
    </ligand>
</feature>
<feature type="binding site" evidence="1">
    <location>
        <position position="24"/>
    </location>
    <ligand>
        <name>[4Fe-4S] cluster</name>
        <dbReference type="ChEBI" id="CHEBI:49883"/>
        <label>1</label>
        <note>4Fe-4S-S-AdoMet</note>
    </ligand>
</feature>
<feature type="binding site" evidence="1">
    <location>
        <position position="28"/>
    </location>
    <ligand>
        <name>[4Fe-4S] cluster</name>
        <dbReference type="ChEBI" id="CHEBI:49883"/>
        <label>1</label>
        <note>4Fe-4S-S-AdoMet</note>
    </ligand>
</feature>
<feature type="binding site" evidence="1">
    <location>
        <position position="30"/>
    </location>
    <ligand>
        <name>S-adenosyl-L-methionine</name>
        <dbReference type="ChEBI" id="CHEBI:59789"/>
    </ligand>
</feature>
<feature type="binding site" evidence="1">
    <location>
        <position position="31"/>
    </location>
    <ligand>
        <name>[4Fe-4S] cluster</name>
        <dbReference type="ChEBI" id="CHEBI:49883"/>
        <label>1</label>
        <note>4Fe-4S-S-AdoMet</note>
    </ligand>
</feature>
<feature type="binding site" evidence="1">
    <location>
        <position position="71"/>
    </location>
    <ligand>
        <name>GTP</name>
        <dbReference type="ChEBI" id="CHEBI:37565"/>
    </ligand>
</feature>
<feature type="binding site" evidence="1">
    <location>
        <position position="75"/>
    </location>
    <ligand>
        <name>S-adenosyl-L-methionine</name>
        <dbReference type="ChEBI" id="CHEBI:59789"/>
    </ligand>
</feature>
<feature type="binding site" evidence="1">
    <location>
        <position position="102"/>
    </location>
    <ligand>
        <name>GTP</name>
        <dbReference type="ChEBI" id="CHEBI:37565"/>
    </ligand>
</feature>
<feature type="binding site" evidence="1">
    <location>
        <position position="126"/>
    </location>
    <ligand>
        <name>S-adenosyl-L-methionine</name>
        <dbReference type="ChEBI" id="CHEBI:59789"/>
    </ligand>
</feature>
<feature type="binding site" evidence="1">
    <location>
        <position position="163"/>
    </location>
    <ligand>
        <name>GTP</name>
        <dbReference type="ChEBI" id="CHEBI:37565"/>
    </ligand>
</feature>
<feature type="binding site" evidence="1">
    <location>
        <position position="197"/>
    </location>
    <ligand>
        <name>S-adenosyl-L-methionine</name>
        <dbReference type="ChEBI" id="CHEBI:59789"/>
    </ligand>
</feature>
<feature type="binding site" evidence="1">
    <location>
        <position position="261"/>
    </location>
    <ligand>
        <name>[4Fe-4S] cluster</name>
        <dbReference type="ChEBI" id="CHEBI:49883"/>
        <label>2</label>
        <note>4Fe-4S-substrate</note>
    </ligand>
</feature>
<feature type="binding site" evidence="1">
    <location>
        <position position="264"/>
    </location>
    <ligand>
        <name>[4Fe-4S] cluster</name>
        <dbReference type="ChEBI" id="CHEBI:49883"/>
        <label>2</label>
        <note>4Fe-4S-substrate</note>
    </ligand>
</feature>
<feature type="binding site" evidence="1">
    <location>
        <begin position="266"/>
        <end position="268"/>
    </location>
    <ligand>
        <name>GTP</name>
        <dbReference type="ChEBI" id="CHEBI:37565"/>
    </ligand>
</feature>
<feature type="binding site" evidence="1">
    <location>
        <position position="278"/>
    </location>
    <ligand>
        <name>[4Fe-4S] cluster</name>
        <dbReference type="ChEBI" id="CHEBI:49883"/>
        <label>2</label>
        <note>4Fe-4S-substrate</note>
    </ligand>
</feature>
<name>MOAA_STAHJ</name>
<keyword id="KW-0004">4Fe-4S</keyword>
<keyword id="KW-0342">GTP-binding</keyword>
<keyword id="KW-0408">Iron</keyword>
<keyword id="KW-0411">Iron-sulfur</keyword>
<keyword id="KW-0456">Lyase</keyword>
<keyword id="KW-0479">Metal-binding</keyword>
<keyword id="KW-0501">Molybdenum cofactor biosynthesis</keyword>
<keyword id="KW-0547">Nucleotide-binding</keyword>
<keyword id="KW-0949">S-adenosyl-L-methionine</keyword>